<sequence>MPGIVTRFAPSPTGFLHIGGARTALFNWLYAKHHGGRFLLRIEDTDRKRSTQEAIDAIIEGLRWLGMSYDGEIVYQSKRIERHKEVANLLVEKGRAYHCYCPEDEVAEKKAKAREEGKIYKHKCTTKPPSCHPSSRHWKNMWSRAGMTSGVRSVVRFKVPDSQEIVIDDKIYGQIKVNSDQLDDIVILRSDNTPTYIFAVVVDDHDAGITDIIRGSDHLTNTFKHLLIYQALDFDIPRFAHVPLIHGEDGNKLSKRHGATSVCDYEKMGILPKAMRNYLLRLGWSHGNDEIISDEQAIEWFNLESIGRSPARLDFKKLEHLNNHYISNMSNEDILTLMLRENTLTDKKKGYLLQGLTELKKRANYLTELLDLAKFYIQDPPLDLSEEAEQIVKSNLDIIKLLASFLSKIGDENWNKGFLSSQIKECAKLHDMKISDVYHSLRAPITGVMDAPGIIDIMVILGKDECIRRLQAI</sequence>
<keyword id="KW-0030">Aminoacyl-tRNA synthetase</keyword>
<keyword id="KW-0067">ATP-binding</keyword>
<keyword id="KW-0963">Cytoplasm</keyword>
<keyword id="KW-0436">Ligase</keyword>
<keyword id="KW-0547">Nucleotide-binding</keyword>
<keyword id="KW-0648">Protein biosynthesis</keyword>
<dbReference type="EC" id="6.1.1.17" evidence="1"/>
<dbReference type="EMBL" id="AE017196">
    <property type="protein sequence ID" value="AAS14158.1"/>
    <property type="molecule type" value="Genomic_DNA"/>
</dbReference>
<dbReference type="SMR" id="Q73HV5"/>
<dbReference type="EnsemblBacteria" id="AAS14158">
    <property type="protein sequence ID" value="AAS14158"/>
    <property type="gene ID" value="WD_0435"/>
</dbReference>
<dbReference type="KEGG" id="wol:WD_0435"/>
<dbReference type="eggNOG" id="COG0008">
    <property type="taxonomic scope" value="Bacteria"/>
</dbReference>
<dbReference type="Proteomes" id="UP000008215">
    <property type="component" value="Chromosome"/>
</dbReference>
<dbReference type="GO" id="GO:0005829">
    <property type="term" value="C:cytosol"/>
    <property type="evidence" value="ECO:0007669"/>
    <property type="project" value="TreeGrafter"/>
</dbReference>
<dbReference type="GO" id="GO:0005524">
    <property type="term" value="F:ATP binding"/>
    <property type="evidence" value="ECO:0007669"/>
    <property type="project" value="UniProtKB-UniRule"/>
</dbReference>
<dbReference type="GO" id="GO:0004818">
    <property type="term" value="F:glutamate-tRNA ligase activity"/>
    <property type="evidence" value="ECO:0007669"/>
    <property type="project" value="UniProtKB-UniRule"/>
</dbReference>
<dbReference type="GO" id="GO:0000049">
    <property type="term" value="F:tRNA binding"/>
    <property type="evidence" value="ECO:0007669"/>
    <property type="project" value="InterPro"/>
</dbReference>
<dbReference type="GO" id="GO:0008270">
    <property type="term" value="F:zinc ion binding"/>
    <property type="evidence" value="ECO:0007669"/>
    <property type="project" value="UniProtKB-UniRule"/>
</dbReference>
<dbReference type="GO" id="GO:0006424">
    <property type="term" value="P:glutamyl-tRNA aminoacylation"/>
    <property type="evidence" value="ECO:0007669"/>
    <property type="project" value="UniProtKB-UniRule"/>
</dbReference>
<dbReference type="CDD" id="cd00808">
    <property type="entry name" value="GluRS_core"/>
    <property type="match status" value="1"/>
</dbReference>
<dbReference type="FunFam" id="3.40.50.620:FF:000007">
    <property type="entry name" value="Glutamate--tRNA ligase"/>
    <property type="match status" value="1"/>
</dbReference>
<dbReference type="Gene3D" id="1.10.10.350">
    <property type="match status" value="1"/>
</dbReference>
<dbReference type="Gene3D" id="3.40.50.620">
    <property type="entry name" value="HUPs"/>
    <property type="match status" value="1"/>
</dbReference>
<dbReference type="HAMAP" id="MF_00022">
    <property type="entry name" value="Glu_tRNA_synth_type1"/>
    <property type="match status" value="1"/>
</dbReference>
<dbReference type="InterPro" id="IPR045462">
    <property type="entry name" value="aa-tRNA-synth_I_cd-bd"/>
</dbReference>
<dbReference type="InterPro" id="IPR020751">
    <property type="entry name" value="aa-tRNA-synth_I_codon-bd_sub2"/>
</dbReference>
<dbReference type="InterPro" id="IPR001412">
    <property type="entry name" value="aa-tRNA-synth_I_CS"/>
</dbReference>
<dbReference type="InterPro" id="IPR008925">
    <property type="entry name" value="aa_tRNA-synth_I_cd-bd_sf"/>
</dbReference>
<dbReference type="InterPro" id="IPR004527">
    <property type="entry name" value="Glu-tRNA-ligase_bac/mito"/>
</dbReference>
<dbReference type="InterPro" id="IPR000924">
    <property type="entry name" value="Glu/Gln-tRNA-synth"/>
</dbReference>
<dbReference type="InterPro" id="IPR020058">
    <property type="entry name" value="Glu/Gln-tRNA-synth_Ib_cat-dom"/>
</dbReference>
<dbReference type="InterPro" id="IPR049940">
    <property type="entry name" value="GluQ/Sye"/>
</dbReference>
<dbReference type="InterPro" id="IPR033910">
    <property type="entry name" value="GluRS_core"/>
</dbReference>
<dbReference type="InterPro" id="IPR014729">
    <property type="entry name" value="Rossmann-like_a/b/a_fold"/>
</dbReference>
<dbReference type="NCBIfam" id="TIGR00464">
    <property type="entry name" value="gltX_bact"/>
    <property type="match status" value="1"/>
</dbReference>
<dbReference type="PANTHER" id="PTHR43311">
    <property type="entry name" value="GLUTAMATE--TRNA LIGASE"/>
    <property type="match status" value="1"/>
</dbReference>
<dbReference type="PANTHER" id="PTHR43311:SF2">
    <property type="entry name" value="GLUTAMATE--TRNA LIGASE, MITOCHONDRIAL-RELATED"/>
    <property type="match status" value="1"/>
</dbReference>
<dbReference type="Pfam" id="PF19269">
    <property type="entry name" value="Anticodon_2"/>
    <property type="match status" value="1"/>
</dbReference>
<dbReference type="Pfam" id="PF00749">
    <property type="entry name" value="tRNA-synt_1c"/>
    <property type="match status" value="1"/>
</dbReference>
<dbReference type="PRINTS" id="PR00987">
    <property type="entry name" value="TRNASYNTHGLU"/>
</dbReference>
<dbReference type="SUPFAM" id="SSF48163">
    <property type="entry name" value="An anticodon-binding domain of class I aminoacyl-tRNA synthetases"/>
    <property type="match status" value="1"/>
</dbReference>
<dbReference type="SUPFAM" id="SSF52374">
    <property type="entry name" value="Nucleotidylyl transferase"/>
    <property type="match status" value="1"/>
</dbReference>
<dbReference type="PROSITE" id="PS00178">
    <property type="entry name" value="AA_TRNA_LIGASE_I"/>
    <property type="match status" value="1"/>
</dbReference>
<evidence type="ECO:0000255" key="1">
    <source>
        <dbReference type="HAMAP-Rule" id="MF_00022"/>
    </source>
</evidence>
<feature type="chain" id="PRO_0000119697" description="Glutamate--tRNA ligase 1">
    <location>
        <begin position="1"/>
        <end position="473"/>
    </location>
</feature>
<feature type="short sequence motif" description="'HIGH' region" evidence="1">
    <location>
        <begin position="10"/>
        <end position="20"/>
    </location>
</feature>
<feature type="short sequence motif" description="'KMSKS' region" evidence="1">
    <location>
        <begin position="252"/>
        <end position="256"/>
    </location>
</feature>
<feature type="binding site" evidence="1">
    <location>
        <position position="255"/>
    </location>
    <ligand>
        <name>ATP</name>
        <dbReference type="ChEBI" id="CHEBI:30616"/>
    </ligand>
</feature>
<name>SYE1_WOLPM</name>
<accession>Q73HV5</accession>
<reference key="1">
    <citation type="journal article" date="2004" name="PLoS Biol.">
        <title>Phylogenomics of the reproductive parasite Wolbachia pipientis wMel: a streamlined genome overrun by mobile genetic elements.</title>
        <authorList>
            <person name="Wu M."/>
            <person name="Sun L.V."/>
            <person name="Vamathevan J.J."/>
            <person name="Riegler M."/>
            <person name="DeBoy R.T."/>
            <person name="Brownlie J.C."/>
            <person name="McGraw E.A."/>
            <person name="Martin W."/>
            <person name="Esser C."/>
            <person name="Ahmadinejad N."/>
            <person name="Wiegand C."/>
            <person name="Madupu R."/>
            <person name="Beanan M.J."/>
            <person name="Brinkac L.M."/>
            <person name="Daugherty S.C."/>
            <person name="Durkin A.S."/>
            <person name="Kolonay J.F."/>
            <person name="Nelson W.C."/>
            <person name="Mohamoud Y."/>
            <person name="Lee P."/>
            <person name="Berry K.J."/>
            <person name="Young M.B."/>
            <person name="Utterback T.R."/>
            <person name="Weidman J.F."/>
            <person name="Nierman W.C."/>
            <person name="Paulsen I.T."/>
            <person name="Nelson K.E."/>
            <person name="Tettelin H."/>
            <person name="O'Neill S.L."/>
            <person name="Eisen J.A."/>
        </authorList>
    </citation>
    <scope>NUCLEOTIDE SEQUENCE [LARGE SCALE GENOMIC DNA]</scope>
</reference>
<protein>
    <recommendedName>
        <fullName evidence="1">Glutamate--tRNA ligase 1</fullName>
        <ecNumber evidence="1">6.1.1.17</ecNumber>
    </recommendedName>
    <alternativeName>
        <fullName evidence="1">Glutamyl-tRNA synthetase 1</fullName>
        <shortName evidence="1">GluRS 1</shortName>
    </alternativeName>
</protein>
<organism>
    <name type="scientific">Wolbachia pipientis wMel</name>
    <dbReference type="NCBI Taxonomy" id="163164"/>
    <lineage>
        <taxon>Bacteria</taxon>
        <taxon>Pseudomonadati</taxon>
        <taxon>Pseudomonadota</taxon>
        <taxon>Alphaproteobacteria</taxon>
        <taxon>Rickettsiales</taxon>
        <taxon>Anaplasmataceae</taxon>
        <taxon>Wolbachieae</taxon>
        <taxon>Wolbachia</taxon>
    </lineage>
</organism>
<comment type="function">
    <text evidence="1">Catalyzes the attachment of glutamate to tRNA(Glu) in a two-step reaction: glutamate is first activated by ATP to form Glu-AMP and then transferred to the acceptor end of tRNA(Glu).</text>
</comment>
<comment type="catalytic activity">
    <reaction evidence="1">
        <text>tRNA(Glu) + L-glutamate + ATP = L-glutamyl-tRNA(Glu) + AMP + diphosphate</text>
        <dbReference type="Rhea" id="RHEA:23540"/>
        <dbReference type="Rhea" id="RHEA-COMP:9663"/>
        <dbReference type="Rhea" id="RHEA-COMP:9680"/>
        <dbReference type="ChEBI" id="CHEBI:29985"/>
        <dbReference type="ChEBI" id="CHEBI:30616"/>
        <dbReference type="ChEBI" id="CHEBI:33019"/>
        <dbReference type="ChEBI" id="CHEBI:78442"/>
        <dbReference type="ChEBI" id="CHEBI:78520"/>
        <dbReference type="ChEBI" id="CHEBI:456215"/>
        <dbReference type="EC" id="6.1.1.17"/>
    </reaction>
</comment>
<comment type="subunit">
    <text evidence="1">Monomer.</text>
</comment>
<comment type="subcellular location">
    <subcellularLocation>
        <location evidence="1">Cytoplasm</location>
    </subcellularLocation>
</comment>
<comment type="similarity">
    <text evidence="1">Belongs to the class-I aminoacyl-tRNA synthetase family. Glutamate--tRNA ligase type 1 subfamily.</text>
</comment>
<gene>
    <name evidence="1" type="primary">gltX1</name>
    <name type="ordered locus">WD_0435</name>
</gene>
<proteinExistence type="inferred from homology"/>